<keyword id="KW-0007">Acetylation</keyword>
<keyword id="KW-0974">Archaeal flagellum</keyword>
<keyword id="KW-0449">Lipoprotein</keyword>
<keyword id="KW-0732">Signal</keyword>
<organism>
    <name type="scientific">Methanococcus voltae</name>
    <dbReference type="NCBI Taxonomy" id="2188"/>
    <lineage>
        <taxon>Archaea</taxon>
        <taxon>Methanobacteriati</taxon>
        <taxon>Methanobacteriota</taxon>
        <taxon>Methanomada group</taxon>
        <taxon>Methanococci</taxon>
        <taxon>Methanococcales</taxon>
        <taxon>Methanococcaceae</taxon>
        <taxon>Methanococcus</taxon>
    </lineage>
</organism>
<gene>
    <name type="primary">flaF</name>
</gene>
<reference key="1">
    <citation type="submission" date="1997-04" db="EMBL/GenBank/DDBJ databases">
        <authorList>
            <person name="Bayley D.P."/>
            <person name="Jarrell K.F."/>
        </authorList>
    </citation>
    <scope>NUCLEOTIDE SEQUENCE [GENOMIC DNA]</scope>
    <source>
        <strain>ATCC 33273 / DSM 1537 / NBRC 100457 / OCM 70 / PS</strain>
    </source>
</reference>
<name>FLAF_METVO</name>
<dbReference type="EMBL" id="U97040">
    <property type="protein sequence ID" value="AAB57830.1"/>
    <property type="molecule type" value="Genomic_DNA"/>
</dbReference>
<dbReference type="PIR" id="T44951">
    <property type="entry name" value="T44951"/>
</dbReference>
<dbReference type="SMR" id="O06639"/>
<dbReference type="OrthoDB" id="63667at2157"/>
<dbReference type="GO" id="GO:0097589">
    <property type="term" value="C:archaeal-type flagellum"/>
    <property type="evidence" value="ECO:0007669"/>
    <property type="project" value="UniProtKB-SubCell"/>
</dbReference>
<protein>
    <recommendedName>
        <fullName>Putative flagella-related protein F</fullName>
    </recommendedName>
</protein>
<feature type="signal peptide" evidence="1">
    <location>
        <begin position="1"/>
        <end position="18"/>
    </location>
</feature>
<feature type="chain" id="PRO_0000021271" description="Putative flagella-related protein F">
    <location>
        <begin position="19"/>
        <end position="132"/>
    </location>
</feature>
<feature type="modified residue" description="N-acetylcysteine" evidence="1">
    <location>
        <position position="19"/>
    </location>
</feature>
<feature type="lipid moiety-binding region" description="S-archaeol cysteine" evidence="1">
    <location>
        <position position="19"/>
    </location>
</feature>
<proteinExistence type="inferred from homology"/>
<comment type="subcellular location">
    <subcellularLocation>
        <location evidence="2">Archaeal flagellum</location>
    </subcellularLocation>
</comment>
<comment type="similarity">
    <text evidence="2">To M.jannaschii FlaF.</text>
</comment>
<sequence>MGFSSTVGSVLILTTLLICSVYLYSSVDVVSSKFTNAYSQHAESLQGKMNENLELVEITKLGDDIVLKLSNNGTETLSCEHWTVMYNGTPKAYIANQSYVAPMDTVQISINGSTPCRISLISEYGNKYYYKL</sequence>
<evidence type="ECO:0000255" key="1"/>
<evidence type="ECO:0000305" key="2"/>
<accession>O06639</accession>